<accession>Q9KCY8</accession>
<gene>
    <name evidence="1" type="primary">thiE</name>
    <name type="ordered locus">BH1431</name>
</gene>
<dbReference type="EC" id="2.5.1.3" evidence="1"/>
<dbReference type="EMBL" id="BA000004">
    <property type="protein sequence ID" value="BAB05150.1"/>
    <property type="molecule type" value="Genomic_DNA"/>
</dbReference>
<dbReference type="PIR" id="G83828">
    <property type="entry name" value="G83828"/>
</dbReference>
<dbReference type="RefSeq" id="WP_010897596.1">
    <property type="nucleotide sequence ID" value="NC_002570.2"/>
</dbReference>
<dbReference type="SMR" id="Q9KCY8"/>
<dbReference type="STRING" id="272558.gene:10727329"/>
<dbReference type="KEGG" id="bha:BH1431"/>
<dbReference type="eggNOG" id="COG0352">
    <property type="taxonomic scope" value="Bacteria"/>
</dbReference>
<dbReference type="HOGENOM" id="CLU_018272_3_2_9"/>
<dbReference type="OrthoDB" id="9812206at2"/>
<dbReference type="UniPathway" id="UPA00060">
    <property type="reaction ID" value="UER00141"/>
</dbReference>
<dbReference type="Proteomes" id="UP000001258">
    <property type="component" value="Chromosome"/>
</dbReference>
<dbReference type="GO" id="GO:0005737">
    <property type="term" value="C:cytoplasm"/>
    <property type="evidence" value="ECO:0007669"/>
    <property type="project" value="TreeGrafter"/>
</dbReference>
<dbReference type="GO" id="GO:0000287">
    <property type="term" value="F:magnesium ion binding"/>
    <property type="evidence" value="ECO:0007669"/>
    <property type="project" value="UniProtKB-UniRule"/>
</dbReference>
<dbReference type="GO" id="GO:0004789">
    <property type="term" value="F:thiamine-phosphate diphosphorylase activity"/>
    <property type="evidence" value="ECO:0007669"/>
    <property type="project" value="UniProtKB-UniRule"/>
</dbReference>
<dbReference type="GO" id="GO:0009228">
    <property type="term" value="P:thiamine biosynthetic process"/>
    <property type="evidence" value="ECO:0007669"/>
    <property type="project" value="UniProtKB-KW"/>
</dbReference>
<dbReference type="GO" id="GO:0009229">
    <property type="term" value="P:thiamine diphosphate biosynthetic process"/>
    <property type="evidence" value="ECO:0007669"/>
    <property type="project" value="UniProtKB-UniRule"/>
</dbReference>
<dbReference type="CDD" id="cd00564">
    <property type="entry name" value="TMP_TenI"/>
    <property type="match status" value="1"/>
</dbReference>
<dbReference type="FunFam" id="3.20.20.70:FF:000096">
    <property type="entry name" value="Thiamine-phosphate synthase"/>
    <property type="match status" value="1"/>
</dbReference>
<dbReference type="Gene3D" id="3.20.20.70">
    <property type="entry name" value="Aldolase class I"/>
    <property type="match status" value="1"/>
</dbReference>
<dbReference type="HAMAP" id="MF_00097">
    <property type="entry name" value="TMP_synthase"/>
    <property type="match status" value="1"/>
</dbReference>
<dbReference type="InterPro" id="IPR013785">
    <property type="entry name" value="Aldolase_TIM"/>
</dbReference>
<dbReference type="InterPro" id="IPR036206">
    <property type="entry name" value="ThiamineP_synth_sf"/>
</dbReference>
<dbReference type="InterPro" id="IPR022998">
    <property type="entry name" value="ThiamineP_synth_TenI"/>
</dbReference>
<dbReference type="InterPro" id="IPR034291">
    <property type="entry name" value="TMP_synthase"/>
</dbReference>
<dbReference type="NCBIfam" id="TIGR00693">
    <property type="entry name" value="thiE"/>
    <property type="match status" value="1"/>
</dbReference>
<dbReference type="PANTHER" id="PTHR20857:SF23">
    <property type="entry name" value="THIAMINE BIOSYNTHETIC BIFUNCTIONAL ENZYME"/>
    <property type="match status" value="1"/>
</dbReference>
<dbReference type="PANTHER" id="PTHR20857">
    <property type="entry name" value="THIAMINE-PHOSPHATE PYROPHOSPHORYLASE"/>
    <property type="match status" value="1"/>
</dbReference>
<dbReference type="Pfam" id="PF02581">
    <property type="entry name" value="TMP-TENI"/>
    <property type="match status" value="1"/>
</dbReference>
<dbReference type="SUPFAM" id="SSF51391">
    <property type="entry name" value="Thiamin phosphate synthase"/>
    <property type="match status" value="1"/>
</dbReference>
<reference key="1">
    <citation type="journal article" date="2000" name="Nucleic Acids Res.">
        <title>Complete genome sequence of the alkaliphilic bacterium Bacillus halodurans and genomic sequence comparison with Bacillus subtilis.</title>
        <authorList>
            <person name="Takami H."/>
            <person name="Nakasone K."/>
            <person name="Takaki Y."/>
            <person name="Maeno G."/>
            <person name="Sasaki R."/>
            <person name="Masui N."/>
            <person name="Fuji F."/>
            <person name="Hirama C."/>
            <person name="Nakamura Y."/>
            <person name="Ogasawara N."/>
            <person name="Kuhara S."/>
            <person name="Horikoshi K."/>
        </authorList>
    </citation>
    <scope>NUCLEOTIDE SEQUENCE [LARGE SCALE GENOMIC DNA]</scope>
    <source>
        <strain>ATCC BAA-125 / DSM 18197 / FERM 7344 / JCM 9153 / C-125</strain>
    </source>
</reference>
<sequence>MRDFRLYAITGEEFHPDRSLQAVMEEAILGGVDIIQLRDKKSHKREVLEKARVLQALAKKYDIPLIINDHIDVALAVDADGIHLGQDDLPLSEARKIMGRDKIIGISTHKIEEAREAEKGGADYIGVGPIFETKSKEDVVDPVTTAYIQQVAHEISIPFVAIGGIKLHNVEQVLDAGATRICMISEIVGAEDVKGTCEVFSTILEQRGIGS</sequence>
<keyword id="KW-0460">Magnesium</keyword>
<keyword id="KW-0479">Metal-binding</keyword>
<keyword id="KW-1185">Reference proteome</keyword>
<keyword id="KW-0784">Thiamine biosynthesis</keyword>
<keyword id="KW-0808">Transferase</keyword>
<proteinExistence type="inferred from homology"/>
<organism>
    <name type="scientific">Halalkalibacterium halodurans (strain ATCC BAA-125 / DSM 18197 / FERM 7344 / JCM 9153 / C-125)</name>
    <name type="common">Bacillus halodurans</name>
    <dbReference type="NCBI Taxonomy" id="272558"/>
    <lineage>
        <taxon>Bacteria</taxon>
        <taxon>Bacillati</taxon>
        <taxon>Bacillota</taxon>
        <taxon>Bacilli</taxon>
        <taxon>Bacillales</taxon>
        <taxon>Bacillaceae</taxon>
        <taxon>Halalkalibacterium (ex Joshi et al. 2022)</taxon>
    </lineage>
</organism>
<name>THIE_HALH5</name>
<evidence type="ECO:0000255" key="1">
    <source>
        <dbReference type="HAMAP-Rule" id="MF_00097"/>
    </source>
</evidence>
<feature type="chain" id="PRO_0000156994" description="Thiamine-phosphate synthase">
    <location>
        <begin position="1"/>
        <end position="211"/>
    </location>
</feature>
<feature type="binding site" evidence="1">
    <location>
        <begin position="36"/>
        <end position="40"/>
    </location>
    <ligand>
        <name>4-amino-2-methyl-5-(diphosphooxymethyl)pyrimidine</name>
        <dbReference type="ChEBI" id="CHEBI:57841"/>
    </ligand>
</feature>
<feature type="binding site" evidence="1">
    <location>
        <position position="68"/>
    </location>
    <ligand>
        <name>4-amino-2-methyl-5-(diphosphooxymethyl)pyrimidine</name>
        <dbReference type="ChEBI" id="CHEBI:57841"/>
    </ligand>
</feature>
<feature type="binding site" evidence="1">
    <location>
        <position position="69"/>
    </location>
    <ligand>
        <name>Mg(2+)</name>
        <dbReference type="ChEBI" id="CHEBI:18420"/>
    </ligand>
</feature>
<feature type="binding site" evidence="1">
    <location>
        <position position="88"/>
    </location>
    <ligand>
        <name>Mg(2+)</name>
        <dbReference type="ChEBI" id="CHEBI:18420"/>
    </ligand>
</feature>
<feature type="binding site" evidence="1">
    <location>
        <position position="107"/>
    </location>
    <ligand>
        <name>4-amino-2-methyl-5-(diphosphooxymethyl)pyrimidine</name>
        <dbReference type="ChEBI" id="CHEBI:57841"/>
    </ligand>
</feature>
<feature type="binding site" evidence="1">
    <location>
        <begin position="133"/>
        <end position="135"/>
    </location>
    <ligand>
        <name>2-[(2R,5Z)-2-carboxy-4-methylthiazol-5(2H)-ylidene]ethyl phosphate</name>
        <dbReference type="ChEBI" id="CHEBI:62899"/>
    </ligand>
</feature>
<feature type="binding site" evidence="1">
    <location>
        <position position="136"/>
    </location>
    <ligand>
        <name>4-amino-2-methyl-5-(diphosphooxymethyl)pyrimidine</name>
        <dbReference type="ChEBI" id="CHEBI:57841"/>
    </ligand>
</feature>
<feature type="binding site" evidence="1">
    <location>
        <position position="164"/>
    </location>
    <ligand>
        <name>2-[(2R,5Z)-2-carboxy-4-methylthiazol-5(2H)-ylidene]ethyl phosphate</name>
        <dbReference type="ChEBI" id="CHEBI:62899"/>
    </ligand>
</feature>
<feature type="binding site" evidence="1">
    <location>
        <begin position="184"/>
        <end position="185"/>
    </location>
    <ligand>
        <name>2-[(2R,5Z)-2-carboxy-4-methylthiazol-5(2H)-ylidene]ethyl phosphate</name>
        <dbReference type="ChEBI" id="CHEBI:62899"/>
    </ligand>
</feature>
<comment type="function">
    <text evidence="1">Condenses 4-methyl-5-(beta-hydroxyethyl)thiazole monophosphate (THZ-P) and 2-methyl-4-amino-5-hydroxymethyl pyrimidine pyrophosphate (HMP-PP) to form thiamine monophosphate (TMP).</text>
</comment>
<comment type="catalytic activity">
    <reaction evidence="1">
        <text>2-[(2R,5Z)-2-carboxy-4-methylthiazol-5(2H)-ylidene]ethyl phosphate + 4-amino-2-methyl-5-(diphosphooxymethyl)pyrimidine + 2 H(+) = thiamine phosphate + CO2 + diphosphate</text>
        <dbReference type="Rhea" id="RHEA:47844"/>
        <dbReference type="ChEBI" id="CHEBI:15378"/>
        <dbReference type="ChEBI" id="CHEBI:16526"/>
        <dbReference type="ChEBI" id="CHEBI:33019"/>
        <dbReference type="ChEBI" id="CHEBI:37575"/>
        <dbReference type="ChEBI" id="CHEBI:57841"/>
        <dbReference type="ChEBI" id="CHEBI:62899"/>
        <dbReference type="EC" id="2.5.1.3"/>
    </reaction>
</comment>
<comment type="catalytic activity">
    <reaction evidence="1">
        <text>2-(2-carboxy-4-methylthiazol-5-yl)ethyl phosphate + 4-amino-2-methyl-5-(diphosphooxymethyl)pyrimidine + 2 H(+) = thiamine phosphate + CO2 + diphosphate</text>
        <dbReference type="Rhea" id="RHEA:47848"/>
        <dbReference type="ChEBI" id="CHEBI:15378"/>
        <dbReference type="ChEBI" id="CHEBI:16526"/>
        <dbReference type="ChEBI" id="CHEBI:33019"/>
        <dbReference type="ChEBI" id="CHEBI:37575"/>
        <dbReference type="ChEBI" id="CHEBI:57841"/>
        <dbReference type="ChEBI" id="CHEBI:62890"/>
        <dbReference type="EC" id="2.5.1.3"/>
    </reaction>
</comment>
<comment type="catalytic activity">
    <reaction evidence="1">
        <text>4-methyl-5-(2-phosphooxyethyl)-thiazole + 4-amino-2-methyl-5-(diphosphooxymethyl)pyrimidine + H(+) = thiamine phosphate + diphosphate</text>
        <dbReference type="Rhea" id="RHEA:22328"/>
        <dbReference type="ChEBI" id="CHEBI:15378"/>
        <dbReference type="ChEBI" id="CHEBI:33019"/>
        <dbReference type="ChEBI" id="CHEBI:37575"/>
        <dbReference type="ChEBI" id="CHEBI:57841"/>
        <dbReference type="ChEBI" id="CHEBI:58296"/>
        <dbReference type="EC" id="2.5.1.3"/>
    </reaction>
</comment>
<comment type="cofactor">
    <cofactor evidence="1">
        <name>Mg(2+)</name>
        <dbReference type="ChEBI" id="CHEBI:18420"/>
    </cofactor>
    <text evidence="1">Binds 1 Mg(2+) ion per subunit.</text>
</comment>
<comment type="pathway">
    <text evidence="1">Cofactor biosynthesis; thiamine diphosphate biosynthesis; thiamine phosphate from 4-amino-2-methyl-5-diphosphomethylpyrimidine and 4-methyl-5-(2-phosphoethyl)-thiazole: step 1/1.</text>
</comment>
<comment type="similarity">
    <text evidence="1">Belongs to the thiamine-phosphate synthase family.</text>
</comment>
<protein>
    <recommendedName>
        <fullName evidence="1">Thiamine-phosphate synthase</fullName>
        <shortName evidence="1">TP synthase</shortName>
        <shortName evidence="1">TPS</shortName>
        <ecNumber evidence="1">2.5.1.3</ecNumber>
    </recommendedName>
    <alternativeName>
        <fullName evidence="1">Thiamine-phosphate pyrophosphorylase</fullName>
        <shortName evidence="1">TMP pyrophosphorylase</shortName>
        <shortName evidence="1">TMP-PPase</shortName>
    </alternativeName>
</protein>